<feature type="signal peptide" evidence="1">
    <location>
        <begin position="1"/>
        <end position="20"/>
    </location>
</feature>
<feature type="chain" id="PRO_0000278530" description="Uncharacterized lipoprotein SAB0395">
    <location>
        <begin position="21"/>
        <end position="258"/>
    </location>
</feature>
<feature type="lipid moiety-binding region" description="N-palmitoyl cysteine" evidence="1">
    <location>
        <position position="21"/>
    </location>
</feature>
<feature type="lipid moiety-binding region" description="S-diacylglycerol cysteine" evidence="1">
    <location>
        <position position="21"/>
    </location>
</feature>
<organism>
    <name type="scientific">Staphylococcus aureus (strain bovine RF122 / ET3-1)</name>
    <dbReference type="NCBI Taxonomy" id="273036"/>
    <lineage>
        <taxon>Bacteria</taxon>
        <taxon>Bacillati</taxon>
        <taxon>Bacillota</taxon>
        <taxon>Bacilli</taxon>
        <taxon>Bacillales</taxon>
        <taxon>Staphylococcaceae</taxon>
        <taxon>Staphylococcus</taxon>
    </lineage>
</organism>
<protein>
    <recommendedName>
        <fullName>Uncharacterized lipoprotein SAB0395</fullName>
    </recommendedName>
</protein>
<name>Y395_STAAB</name>
<accession>Q2YVQ5</accession>
<evidence type="ECO:0000255" key="1">
    <source>
        <dbReference type="PROSITE-ProRule" id="PRU00303"/>
    </source>
</evidence>
<evidence type="ECO:0000305" key="2"/>
<comment type="subcellular location">
    <subcellularLocation>
        <location evidence="1">Cell membrane</location>
        <topology evidence="1">Lipid-anchor</topology>
    </subcellularLocation>
</comment>
<comment type="similarity">
    <text evidence="2">Belongs to the staphylococcal tandem lipoprotein family.</text>
</comment>
<dbReference type="EMBL" id="AJ938182">
    <property type="protein sequence ID" value="CAI80083.1"/>
    <property type="molecule type" value="Genomic_DNA"/>
</dbReference>
<dbReference type="RefSeq" id="WP_000649613.1">
    <property type="nucleotide sequence ID" value="NC_007622.1"/>
</dbReference>
<dbReference type="SMR" id="Q2YVQ5"/>
<dbReference type="KEGG" id="sab:SAB0395"/>
<dbReference type="HOGENOM" id="CLU_071589_0_1_9"/>
<dbReference type="GO" id="GO:0005886">
    <property type="term" value="C:plasma membrane"/>
    <property type="evidence" value="ECO:0007669"/>
    <property type="project" value="UniProtKB-SubCell"/>
</dbReference>
<dbReference type="Gene3D" id="2.50.20.40">
    <property type="match status" value="1"/>
</dbReference>
<dbReference type="InterPro" id="IPR007595">
    <property type="entry name" value="Csa"/>
</dbReference>
<dbReference type="InterPro" id="IPR038641">
    <property type="entry name" value="Csa_sf"/>
</dbReference>
<dbReference type="NCBIfam" id="TIGR01742">
    <property type="entry name" value="SA_tandem_lipo"/>
    <property type="match status" value="1"/>
</dbReference>
<dbReference type="Pfam" id="PF04507">
    <property type="entry name" value="DUF576"/>
    <property type="match status" value="1"/>
</dbReference>
<dbReference type="PROSITE" id="PS51257">
    <property type="entry name" value="PROKAR_LIPOPROTEIN"/>
    <property type="match status" value="1"/>
</dbReference>
<reference key="1">
    <citation type="journal article" date="2007" name="PLoS ONE">
        <title>Molecular correlates of host specialization in Staphylococcus aureus.</title>
        <authorList>
            <person name="Herron-Olson L."/>
            <person name="Fitzgerald J.R."/>
            <person name="Musser J.M."/>
            <person name="Kapur V."/>
        </authorList>
    </citation>
    <scope>NUCLEOTIDE SEQUENCE [LARGE SCALE GENOMIC DNA]</scope>
    <source>
        <strain>bovine RF122 / ET3-1</strain>
    </source>
</reference>
<gene>
    <name type="ordered locus">SAB0395</name>
</gene>
<sequence>MKCFQKLYIFILILIVLMAGCESNKITGDSKETQIKKSFAKTLDVYPTKNLEDFYDREGYRDGEFKKGDKGKWVIRSEITTELKNENMVSKGMVIRLNRNSRTCTGEYFVRIVKEDSEGKVYSDERKYPVKMENNKIIPLKPIDDEKVKKEIEEFKFFVQYGNFKELENYKEDEVSYNPEVPIYSAKYQLKNSDYNVEQLRKRYNIPTKKAPKLLLKGSGNLKDSSVGYKNIEFTFIENKEENIYFTDSIYFNPSVDK</sequence>
<keyword id="KW-1003">Cell membrane</keyword>
<keyword id="KW-0449">Lipoprotein</keyword>
<keyword id="KW-0472">Membrane</keyword>
<keyword id="KW-0564">Palmitate</keyword>
<keyword id="KW-0732">Signal</keyword>
<proteinExistence type="inferred from homology"/>